<comment type="function">
    <text evidence="1">Catalyzes the interconversion of 2-phosphoglycerate and 3-phosphoglycerate.</text>
</comment>
<comment type="catalytic activity">
    <reaction evidence="1">
        <text>(2R)-2-phosphoglycerate = (2R)-3-phosphoglycerate</text>
        <dbReference type="Rhea" id="RHEA:15901"/>
        <dbReference type="ChEBI" id="CHEBI:58272"/>
        <dbReference type="ChEBI" id="CHEBI:58289"/>
        <dbReference type="EC" id="5.4.2.12"/>
    </reaction>
</comment>
<comment type="cofactor">
    <cofactor evidence="1">
        <name>Mn(2+)</name>
        <dbReference type="ChEBI" id="CHEBI:29035"/>
    </cofactor>
    <text evidence="1">Binds 2 manganese ions per subunit.</text>
</comment>
<comment type="pathway">
    <text evidence="1">Carbohydrate degradation; glycolysis; pyruvate from D-glyceraldehyde 3-phosphate: step 3/5.</text>
</comment>
<comment type="subunit">
    <text evidence="1">Monomer.</text>
</comment>
<comment type="similarity">
    <text evidence="1">Belongs to the BPG-independent phosphoglycerate mutase family.</text>
</comment>
<gene>
    <name evidence="1" type="primary">gpmI</name>
    <name type="ordered locus">Pcar_2574</name>
</gene>
<name>GPMI_SYNC1</name>
<keyword id="KW-0324">Glycolysis</keyword>
<keyword id="KW-0413">Isomerase</keyword>
<keyword id="KW-0464">Manganese</keyword>
<keyword id="KW-0479">Metal-binding</keyword>
<keyword id="KW-1185">Reference proteome</keyword>
<evidence type="ECO:0000255" key="1">
    <source>
        <dbReference type="HAMAP-Rule" id="MF_01038"/>
    </source>
</evidence>
<feature type="chain" id="PRO_0000212181" description="2,3-bisphosphoglycerate-independent phosphoglycerate mutase">
    <location>
        <begin position="1"/>
        <end position="514"/>
    </location>
</feature>
<feature type="active site" description="Phosphoserine intermediate" evidence="1">
    <location>
        <position position="65"/>
    </location>
</feature>
<feature type="binding site" evidence="1">
    <location>
        <position position="15"/>
    </location>
    <ligand>
        <name>Mn(2+)</name>
        <dbReference type="ChEBI" id="CHEBI:29035"/>
        <label>2</label>
    </ligand>
</feature>
<feature type="binding site" evidence="1">
    <location>
        <position position="65"/>
    </location>
    <ligand>
        <name>Mn(2+)</name>
        <dbReference type="ChEBI" id="CHEBI:29035"/>
        <label>2</label>
    </ligand>
</feature>
<feature type="binding site" evidence="1">
    <location>
        <position position="126"/>
    </location>
    <ligand>
        <name>substrate</name>
    </ligand>
</feature>
<feature type="binding site" evidence="1">
    <location>
        <begin position="156"/>
        <end position="157"/>
    </location>
    <ligand>
        <name>substrate</name>
    </ligand>
</feature>
<feature type="binding site" evidence="1">
    <location>
        <position position="188"/>
    </location>
    <ligand>
        <name>substrate</name>
    </ligand>
</feature>
<feature type="binding site" evidence="1">
    <location>
        <position position="194"/>
    </location>
    <ligand>
        <name>substrate</name>
    </ligand>
</feature>
<feature type="binding site" evidence="1">
    <location>
        <begin position="261"/>
        <end position="264"/>
    </location>
    <ligand>
        <name>substrate</name>
    </ligand>
</feature>
<feature type="binding site" evidence="1">
    <location>
        <position position="335"/>
    </location>
    <ligand>
        <name>substrate</name>
    </ligand>
</feature>
<feature type="binding site" evidence="1">
    <location>
        <position position="403"/>
    </location>
    <ligand>
        <name>Mn(2+)</name>
        <dbReference type="ChEBI" id="CHEBI:29035"/>
        <label>1</label>
    </ligand>
</feature>
<feature type="binding site" evidence="1">
    <location>
        <position position="407"/>
    </location>
    <ligand>
        <name>Mn(2+)</name>
        <dbReference type="ChEBI" id="CHEBI:29035"/>
        <label>1</label>
    </ligand>
</feature>
<feature type="binding site" evidence="1">
    <location>
        <position position="444"/>
    </location>
    <ligand>
        <name>Mn(2+)</name>
        <dbReference type="ChEBI" id="CHEBI:29035"/>
        <label>2</label>
    </ligand>
</feature>
<feature type="binding site" evidence="1">
    <location>
        <position position="445"/>
    </location>
    <ligand>
        <name>Mn(2+)</name>
        <dbReference type="ChEBI" id="CHEBI:29035"/>
        <label>2</label>
    </ligand>
</feature>
<feature type="binding site" evidence="1">
    <location>
        <position position="462"/>
    </location>
    <ligand>
        <name>Mn(2+)</name>
        <dbReference type="ChEBI" id="CHEBI:29035"/>
        <label>1</label>
    </ligand>
</feature>
<sequence>MTVEIRRPVALVILDGWGINPVCEHNAVCQADTPRLRALLESWPHARIGASGRDVGLPDGQMGNSEVGHLNIGAGRTVYQDLTRISLSIEEDTFFENTELRKVMQQVVESQGKLHLMGLLSDGGVHSHMEHLYALVEMARRAGVEQVCIHAFMDGRDTPPQSGAGYLAQLEDKLQDIGLGRVATVIGRYWAMDRDNRWERVEKAYRAMTEGVGTSFESSAAAIADAYAQGQTDEFVEPRFVGGEKPCTVDDGDGMIFFNFRADRAREITRTFTSSDFSGFSREKTPRLAGYVCLTEYDASFGLPMAFPPETYPELLGEVVSRAGRKQLRIAETEKYAHVTFFFNGGSEEPFDGEDRVLIPSPKEVATYDLKPEMSAPAVTDAMLERVASGRYDLIVLNFANPDMVGHTGVESAAIAAMETVDACVGRVVDAVLNAGGSLLITADHGNCEQMADAKGAPHTAHTSNPVPVILVDPDRTGVKLRNGILADLAPTLLELMGIDKPAAMTGRSLLEPS</sequence>
<organism>
    <name type="scientific">Syntrophotalea carbinolica (strain DSM 2380 / NBRC 103641 / GraBd1)</name>
    <name type="common">Pelobacter carbinolicus</name>
    <dbReference type="NCBI Taxonomy" id="338963"/>
    <lineage>
        <taxon>Bacteria</taxon>
        <taxon>Pseudomonadati</taxon>
        <taxon>Thermodesulfobacteriota</taxon>
        <taxon>Desulfuromonadia</taxon>
        <taxon>Desulfuromonadales</taxon>
        <taxon>Syntrophotaleaceae</taxon>
        <taxon>Syntrophotalea</taxon>
    </lineage>
</organism>
<accession>Q3A1E5</accession>
<proteinExistence type="inferred from homology"/>
<protein>
    <recommendedName>
        <fullName evidence="1">2,3-bisphosphoglycerate-independent phosphoglycerate mutase</fullName>
        <shortName evidence="1">BPG-independent PGAM</shortName>
        <shortName evidence="1">Phosphoglyceromutase</shortName>
        <shortName evidence="1">iPGM</shortName>
        <ecNumber evidence="1">5.4.2.12</ecNumber>
    </recommendedName>
</protein>
<reference key="1">
    <citation type="submission" date="2005-10" db="EMBL/GenBank/DDBJ databases">
        <title>Complete sequence of Pelobacter carbinolicus DSM 2380.</title>
        <authorList>
            <person name="Copeland A."/>
            <person name="Lucas S."/>
            <person name="Lapidus A."/>
            <person name="Barry K."/>
            <person name="Detter J.C."/>
            <person name="Glavina T."/>
            <person name="Hammon N."/>
            <person name="Israni S."/>
            <person name="Pitluck S."/>
            <person name="Chertkov O."/>
            <person name="Schmutz J."/>
            <person name="Larimer F."/>
            <person name="Land M."/>
            <person name="Kyrpides N."/>
            <person name="Ivanova N."/>
            <person name="Richardson P."/>
        </authorList>
    </citation>
    <scope>NUCLEOTIDE SEQUENCE [LARGE SCALE GENOMIC DNA]</scope>
    <source>
        <strain>DSM 2380 / NBRC 103641 / GraBd1</strain>
    </source>
</reference>
<dbReference type="EC" id="5.4.2.12" evidence="1"/>
<dbReference type="EMBL" id="CP000142">
    <property type="protein sequence ID" value="ABA89812.1"/>
    <property type="molecule type" value="Genomic_DNA"/>
</dbReference>
<dbReference type="RefSeq" id="WP_011342350.1">
    <property type="nucleotide sequence ID" value="NC_007498.2"/>
</dbReference>
<dbReference type="SMR" id="Q3A1E5"/>
<dbReference type="STRING" id="338963.Pcar_2574"/>
<dbReference type="KEGG" id="pca:Pcar_2574"/>
<dbReference type="eggNOG" id="COG0696">
    <property type="taxonomic scope" value="Bacteria"/>
</dbReference>
<dbReference type="HOGENOM" id="CLU_026099_2_0_7"/>
<dbReference type="OrthoDB" id="9800863at2"/>
<dbReference type="UniPathway" id="UPA00109">
    <property type="reaction ID" value="UER00186"/>
</dbReference>
<dbReference type="Proteomes" id="UP000002534">
    <property type="component" value="Chromosome"/>
</dbReference>
<dbReference type="GO" id="GO:0005829">
    <property type="term" value="C:cytosol"/>
    <property type="evidence" value="ECO:0007669"/>
    <property type="project" value="TreeGrafter"/>
</dbReference>
<dbReference type="GO" id="GO:0030145">
    <property type="term" value="F:manganese ion binding"/>
    <property type="evidence" value="ECO:0007669"/>
    <property type="project" value="UniProtKB-UniRule"/>
</dbReference>
<dbReference type="GO" id="GO:0004619">
    <property type="term" value="F:phosphoglycerate mutase activity"/>
    <property type="evidence" value="ECO:0007669"/>
    <property type="project" value="UniProtKB-EC"/>
</dbReference>
<dbReference type="GO" id="GO:0006007">
    <property type="term" value="P:glucose catabolic process"/>
    <property type="evidence" value="ECO:0007669"/>
    <property type="project" value="InterPro"/>
</dbReference>
<dbReference type="GO" id="GO:0006096">
    <property type="term" value="P:glycolytic process"/>
    <property type="evidence" value="ECO:0007669"/>
    <property type="project" value="UniProtKB-UniRule"/>
</dbReference>
<dbReference type="CDD" id="cd16010">
    <property type="entry name" value="iPGM"/>
    <property type="match status" value="1"/>
</dbReference>
<dbReference type="FunFam" id="3.40.1450.10:FF:000001">
    <property type="entry name" value="2,3-bisphosphoglycerate-independent phosphoglycerate mutase"/>
    <property type="match status" value="1"/>
</dbReference>
<dbReference type="Gene3D" id="3.40.720.10">
    <property type="entry name" value="Alkaline Phosphatase, subunit A"/>
    <property type="match status" value="1"/>
</dbReference>
<dbReference type="Gene3D" id="3.40.1450.10">
    <property type="entry name" value="BPG-independent phosphoglycerate mutase, domain B"/>
    <property type="match status" value="1"/>
</dbReference>
<dbReference type="HAMAP" id="MF_01038">
    <property type="entry name" value="GpmI"/>
    <property type="match status" value="1"/>
</dbReference>
<dbReference type="InterPro" id="IPR017850">
    <property type="entry name" value="Alkaline_phosphatase_core_sf"/>
</dbReference>
<dbReference type="InterPro" id="IPR011258">
    <property type="entry name" value="BPG-indep_PGM_N"/>
</dbReference>
<dbReference type="InterPro" id="IPR006124">
    <property type="entry name" value="Metalloenzyme"/>
</dbReference>
<dbReference type="InterPro" id="IPR036646">
    <property type="entry name" value="PGAM_B_sf"/>
</dbReference>
<dbReference type="InterPro" id="IPR005995">
    <property type="entry name" value="Pgm_bpd_ind"/>
</dbReference>
<dbReference type="NCBIfam" id="TIGR01307">
    <property type="entry name" value="pgm_bpd_ind"/>
    <property type="match status" value="1"/>
</dbReference>
<dbReference type="PANTHER" id="PTHR31637">
    <property type="entry name" value="2,3-BISPHOSPHOGLYCERATE-INDEPENDENT PHOSPHOGLYCERATE MUTASE"/>
    <property type="match status" value="1"/>
</dbReference>
<dbReference type="PANTHER" id="PTHR31637:SF0">
    <property type="entry name" value="2,3-BISPHOSPHOGLYCERATE-INDEPENDENT PHOSPHOGLYCERATE MUTASE"/>
    <property type="match status" value="1"/>
</dbReference>
<dbReference type="Pfam" id="PF06415">
    <property type="entry name" value="iPGM_N"/>
    <property type="match status" value="1"/>
</dbReference>
<dbReference type="Pfam" id="PF01676">
    <property type="entry name" value="Metalloenzyme"/>
    <property type="match status" value="1"/>
</dbReference>
<dbReference type="PIRSF" id="PIRSF001492">
    <property type="entry name" value="IPGAM"/>
    <property type="match status" value="1"/>
</dbReference>
<dbReference type="SUPFAM" id="SSF64158">
    <property type="entry name" value="2,3-Bisphosphoglycerate-independent phosphoglycerate mutase, substrate-binding domain"/>
    <property type="match status" value="1"/>
</dbReference>
<dbReference type="SUPFAM" id="SSF53649">
    <property type="entry name" value="Alkaline phosphatase-like"/>
    <property type="match status" value="1"/>
</dbReference>